<comment type="similarity">
    <text evidence="2">Belongs to the small GTPase superfamily. Rab family.</text>
</comment>
<organism>
    <name type="scientific">Dictyostelium discoideum</name>
    <name type="common">Social amoeba</name>
    <dbReference type="NCBI Taxonomy" id="44689"/>
    <lineage>
        <taxon>Eukaryota</taxon>
        <taxon>Amoebozoa</taxon>
        <taxon>Evosea</taxon>
        <taxon>Eumycetozoa</taxon>
        <taxon>Dictyostelia</taxon>
        <taxon>Dictyosteliales</taxon>
        <taxon>Dictyosteliaceae</taxon>
        <taxon>Dictyostelium</taxon>
    </lineage>
</organism>
<name>RABK1_DICDI</name>
<gene>
    <name type="primary">rabK1</name>
    <name type="ORF">DDB_G0290833</name>
</gene>
<evidence type="ECO:0000250" key="1"/>
<evidence type="ECO:0000305" key="2"/>
<dbReference type="EMBL" id="AAFI02000171">
    <property type="protein sequence ID" value="EAL62050.3"/>
    <property type="molecule type" value="Genomic_DNA"/>
</dbReference>
<dbReference type="RefSeq" id="XP_635536.3">
    <property type="nucleotide sequence ID" value="XM_630444.3"/>
</dbReference>
<dbReference type="SMR" id="Q54FK4"/>
<dbReference type="FunCoup" id="Q54FK4">
    <property type="interactions" value="6"/>
</dbReference>
<dbReference type="STRING" id="44689.Q54FK4"/>
<dbReference type="PaxDb" id="44689-DDB0230020"/>
<dbReference type="EnsemblProtists" id="EAL62050">
    <property type="protein sequence ID" value="EAL62050"/>
    <property type="gene ID" value="DDB_G0290833"/>
</dbReference>
<dbReference type="GeneID" id="8627833"/>
<dbReference type="KEGG" id="ddi:DDB_G0290833"/>
<dbReference type="dictyBase" id="DDB_G0290833">
    <property type="gene designation" value="rabK1"/>
</dbReference>
<dbReference type="VEuPathDB" id="AmoebaDB:DDB_G0290833"/>
<dbReference type="eggNOG" id="KOG0394">
    <property type="taxonomic scope" value="Eukaryota"/>
</dbReference>
<dbReference type="HOGENOM" id="CLU_041217_21_2_1"/>
<dbReference type="InParanoid" id="Q54FK4"/>
<dbReference type="PhylomeDB" id="Q54FK4"/>
<dbReference type="Reactome" id="R-DDI-6798695">
    <property type="pathway name" value="Neutrophil degranulation"/>
</dbReference>
<dbReference type="Reactome" id="R-DDI-8854214">
    <property type="pathway name" value="TBC/RABGAPs"/>
</dbReference>
<dbReference type="Reactome" id="R-DDI-8873719">
    <property type="pathway name" value="RAB geranylgeranylation"/>
</dbReference>
<dbReference type="Reactome" id="R-DDI-8876198">
    <property type="pathway name" value="RAB GEFs exchange GTP for GDP on RABs"/>
</dbReference>
<dbReference type="Reactome" id="R-DDI-9706019">
    <property type="pathway name" value="RHOBTB3 ATPase cycle"/>
</dbReference>
<dbReference type="PRO" id="PR:Q54FK4"/>
<dbReference type="Proteomes" id="UP000002195">
    <property type="component" value="Chromosome 5"/>
</dbReference>
<dbReference type="GO" id="GO:0005770">
    <property type="term" value="C:late endosome"/>
    <property type="evidence" value="ECO:0000318"/>
    <property type="project" value="GO_Central"/>
</dbReference>
<dbReference type="GO" id="GO:0005764">
    <property type="term" value="C:lysosome"/>
    <property type="evidence" value="ECO:0000318"/>
    <property type="project" value="GO_Central"/>
</dbReference>
<dbReference type="GO" id="GO:0045335">
    <property type="term" value="C:phagocytic vesicle"/>
    <property type="evidence" value="ECO:0000318"/>
    <property type="project" value="GO_Central"/>
</dbReference>
<dbReference type="GO" id="GO:0005525">
    <property type="term" value="F:GTP binding"/>
    <property type="evidence" value="ECO:0007669"/>
    <property type="project" value="UniProtKB-KW"/>
</dbReference>
<dbReference type="GO" id="GO:0003924">
    <property type="term" value="F:GTPase activity"/>
    <property type="evidence" value="ECO:0007669"/>
    <property type="project" value="InterPro"/>
</dbReference>
<dbReference type="GO" id="GO:0090385">
    <property type="term" value="P:phagosome-lysosome fusion"/>
    <property type="evidence" value="ECO:0000318"/>
    <property type="project" value="GO_Central"/>
</dbReference>
<dbReference type="FunFam" id="3.40.50.300:FF:003048">
    <property type="entry name" value="Ras-related protein RabN2"/>
    <property type="match status" value="1"/>
</dbReference>
<dbReference type="Gene3D" id="3.40.50.300">
    <property type="entry name" value="P-loop containing nucleotide triphosphate hydrolases"/>
    <property type="match status" value="1"/>
</dbReference>
<dbReference type="InterPro" id="IPR027417">
    <property type="entry name" value="P-loop_NTPase"/>
</dbReference>
<dbReference type="InterPro" id="IPR001806">
    <property type="entry name" value="Small_GTPase"/>
</dbReference>
<dbReference type="PANTHER" id="PTHR47981">
    <property type="entry name" value="RAB FAMILY"/>
    <property type="match status" value="1"/>
</dbReference>
<dbReference type="PANTHER" id="PTHR47981:SF20">
    <property type="entry name" value="RAS-RELATED PROTEIN RAB-7A"/>
    <property type="match status" value="1"/>
</dbReference>
<dbReference type="Pfam" id="PF00071">
    <property type="entry name" value="Ras"/>
    <property type="match status" value="1"/>
</dbReference>
<dbReference type="PRINTS" id="PR00449">
    <property type="entry name" value="RASTRNSFRMNG"/>
</dbReference>
<dbReference type="SMART" id="SM00175">
    <property type="entry name" value="RAB"/>
    <property type="match status" value="1"/>
</dbReference>
<dbReference type="SMART" id="SM00173">
    <property type="entry name" value="RAS"/>
    <property type="match status" value="1"/>
</dbReference>
<dbReference type="SMART" id="SM00174">
    <property type="entry name" value="RHO"/>
    <property type="match status" value="1"/>
</dbReference>
<dbReference type="SUPFAM" id="SSF52540">
    <property type="entry name" value="P-loop containing nucleoside triphosphate hydrolases"/>
    <property type="match status" value="1"/>
</dbReference>
<dbReference type="PROSITE" id="PS51419">
    <property type="entry name" value="RAB"/>
    <property type="match status" value="1"/>
</dbReference>
<protein>
    <recommendedName>
        <fullName>Ras-related protein RabK1</fullName>
    </recommendedName>
</protein>
<reference key="1">
    <citation type="journal article" date="2005" name="Nature">
        <title>The genome of the social amoeba Dictyostelium discoideum.</title>
        <authorList>
            <person name="Eichinger L."/>
            <person name="Pachebat J.A."/>
            <person name="Gloeckner G."/>
            <person name="Rajandream M.A."/>
            <person name="Sucgang R."/>
            <person name="Berriman M."/>
            <person name="Song J."/>
            <person name="Olsen R."/>
            <person name="Szafranski K."/>
            <person name="Xu Q."/>
            <person name="Tunggal B."/>
            <person name="Kummerfeld S."/>
            <person name="Madera M."/>
            <person name="Konfortov B.A."/>
            <person name="Rivero F."/>
            <person name="Bankier A.T."/>
            <person name="Lehmann R."/>
            <person name="Hamlin N."/>
            <person name="Davies R."/>
            <person name="Gaudet P."/>
            <person name="Fey P."/>
            <person name="Pilcher K."/>
            <person name="Chen G."/>
            <person name="Saunders D."/>
            <person name="Sodergren E.J."/>
            <person name="Davis P."/>
            <person name="Kerhornou A."/>
            <person name="Nie X."/>
            <person name="Hall N."/>
            <person name="Anjard C."/>
            <person name="Hemphill L."/>
            <person name="Bason N."/>
            <person name="Farbrother P."/>
            <person name="Desany B."/>
            <person name="Just E."/>
            <person name="Morio T."/>
            <person name="Rost R."/>
            <person name="Churcher C.M."/>
            <person name="Cooper J."/>
            <person name="Haydock S."/>
            <person name="van Driessche N."/>
            <person name="Cronin A."/>
            <person name="Goodhead I."/>
            <person name="Muzny D.M."/>
            <person name="Mourier T."/>
            <person name="Pain A."/>
            <person name="Lu M."/>
            <person name="Harper D."/>
            <person name="Lindsay R."/>
            <person name="Hauser H."/>
            <person name="James K.D."/>
            <person name="Quiles M."/>
            <person name="Madan Babu M."/>
            <person name="Saito T."/>
            <person name="Buchrieser C."/>
            <person name="Wardroper A."/>
            <person name="Felder M."/>
            <person name="Thangavelu M."/>
            <person name="Johnson D."/>
            <person name="Knights A."/>
            <person name="Loulseged H."/>
            <person name="Mungall K.L."/>
            <person name="Oliver K."/>
            <person name="Price C."/>
            <person name="Quail M.A."/>
            <person name="Urushihara H."/>
            <person name="Hernandez J."/>
            <person name="Rabbinowitsch E."/>
            <person name="Steffen D."/>
            <person name="Sanders M."/>
            <person name="Ma J."/>
            <person name="Kohara Y."/>
            <person name="Sharp S."/>
            <person name="Simmonds M.N."/>
            <person name="Spiegler S."/>
            <person name="Tivey A."/>
            <person name="Sugano S."/>
            <person name="White B."/>
            <person name="Walker D."/>
            <person name="Woodward J.R."/>
            <person name="Winckler T."/>
            <person name="Tanaka Y."/>
            <person name="Shaulsky G."/>
            <person name="Schleicher M."/>
            <person name="Weinstock G.M."/>
            <person name="Rosenthal A."/>
            <person name="Cox E.C."/>
            <person name="Chisholm R.L."/>
            <person name="Gibbs R.A."/>
            <person name="Loomis W.F."/>
            <person name="Platzer M."/>
            <person name="Kay R.R."/>
            <person name="Williams J.G."/>
            <person name="Dear P.H."/>
            <person name="Noegel A.A."/>
            <person name="Barrell B.G."/>
            <person name="Kuspa A."/>
        </authorList>
    </citation>
    <scope>NUCLEOTIDE SEQUENCE [LARGE SCALE GENOMIC DNA]</scope>
    <source>
        <strain>AX4</strain>
    </source>
</reference>
<accession>Q54FK4</accession>
<proteinExistence type="inferred from homology"/>
<keyword id="KW-0342">GTP-binding</keyword>
<keyword id="KW-0547">Nucleotide-binding</keyword>
<keyword id="KW-1185">Reference proteome</keyword>
<feature type="chain" id="PRO_0000332757" description="Ras-related protein RabK1">
    <location>
        <begin position="1"/>
        <end position="213"/>
    </location>
</feature>
<feature type="short sequence motif" description="Effector region" evidence="1">
    <location>
        <begin position="36"/>
        <end position="43"/>
    </location>
</feature>
<feature type="binding site" evidence="1">
    <location>
        <begin position="14"/>
        <end position="21"/>
    </location>
    <ligand>
        <name>GTP</name>
        <dbReference type="ChEBI" id="CHEBI:37565"/>
    </ligand>
</feature>
<feature type="binding site" evidence="1">
    <location>
        <begin position="61"/>
        <end position="65"/>
    </location>
    <ligand>
        <name>GTP</name>
        <dbReference type="ChEBI" id="CHEBI:37565"/>
    </ligand>
</feature>
<feature type="binding site" evidence="1">
    <location>
        <begin position="119"/>
        <end position="122"/>
    </location>
    <ligand>
        <name>GTP</name>
        <dbReference type="ChEBI" id="CHEBI:37565"/>
    </ligand>
</feature>
<sequence>MDNKRKLLKIITIGDRMVGKLSIIKNYMGRPFFQWGNSIPFDFHFKEIIIDNETVSLQLWNTHGSAYEDSKIYYRDVDCCVVCFNIHNEQSFNNLIYWIKELEANTLVDEKVPFVLIGTKSDIERTEKSISKERIEQWCKQIEDQGIVKEKIHYFETSAKLSTNIIEAYETIVKIALNQYKNKQKNSINISIEPEKPKGIFQIMIFMGVVFYF</sequence>